<reference key="1">
    <citation type="journal article" date="2007" name="Plant Cell">
        <title>Dothideomycete-plant interactions illuminated by genome sequencing and EST analysis of the wheat pathogen Stagonospora nodorum.</title>
        <authorList>
            <person name="Hane J.K."/>
            <person name="Lowe R.G.T."/>
            <person name="Solomon P.S."/>
            <person name="Tan K.-C."/>
            <person name="Schoch C.L."/>
            <person name="Spatafora J.W."/>
            <person name="Crous P.W."/>
            <person name="Kodira C.D."/>
            <person name="Birren B.W."/>
            <person name="Galagan J.E."/>
            <person name="Torriani S.F.F."/>
            <person name="McDonald B.A."/>
            <person name="Oliver R.P."/>
        </authorList>
    </citation>
    <scope>NUCLEOTIDE SEQUENCE [LARGE SCALE GENOMIC DNA]</scope>
    <source>
        <strain>SN15 / ATCC MYA-4574 / FGSC 10173</strain>
    </source>
</reference>
<organism>
    <name type="scientific">Phaeosphaeria nodorum (strain SN15 / ATCC MYA-4574 / FGSC 10173)</name>
    <name type="common">Glume blotch fungus</name>
    <name type="synonym">Parastagonospora nodorum</name>
    <dbReference type="NCBI Taxonomy" id="321614"/>
    <lineage>
        <taxon>Eukaryota</taxon>
        <taxon>Fungi</taxon>
        <taxon>Dikarya</taxon>
        <taxon>Ascomycota</taxon>
        <taxon>Pezizomycotina</taxon>
        <taxon>Dothideomycetes</taxon>
        <taxon>Pleosporomycetidae</taxon>
        <taxon>Pleosporales</taxon>
        <taxon>Pleosporineae</taxon>
        <taxon>Phaeosphaeriaceae</taxon>
        <taxon>Parastagonospora</taxon>
    </lineage>
</organism>
<gene>
    <name type="primary">SET9</name>
    <name type="ORF">SNOG_13760</name>
</gene>
<keyword id="KW-0156">Chromatin regulator</keyword>
<keyword id="KW-0158">Chromosome</keyword>
<keyword id="KW-0489">Methyltransferase</keyword>
<keyword id="KW-0539">Nucleus</keyword>
<keyword id="KW-0949">S-adenosyl-L-methionine</keyword>
<keyword id="KW-0808">Transferase</keyword>
<comment type="function">
    <text evidence="2">Histone methyltransferase that trimethylates 'Lys-20' of histone H4 to form H4K20me3.</text>
</comment>
<comment type="catalytic activity">
    <reaction evidence="2 4">
        <text>L-lysyl(20)-[histone H4] + 3 S-adenosyl-L-methionine = N(6),N(6),N(6)-trimethyl-L-lysyl(20)-[histone H4] + 3 S-adenosyl-L-homocysteine + 3 H(+)</text>
        <dbReference type="Rhea" id="RHEA:64456"/>
        <dbReference type="Rhea" id="RHEA-COMP:15554"/>
        <dbReference type="Rhea" id="RHEA-COMP:15998"/>
        <dbReference type="ChEBI" id="CHEBI:15378"/>
        <dbReference type="ChEBI" id="CHEBI:29969"/>
        <dbReference type="ChEBI" id="CHEBI:57856"/>
        <dbReference type="ChEBI" id="CHEBI:59789"/>
        <dbReference type="ChEBI" id="CHEBI:61961"/>
        <dbReference type="EC" id="2.1.1.372"/>
    </reaction>
</comment>
<comment type="subcellular location">
    <subcellularLocation>
        <location evidence="1">Nucleus</location>
    </subcellularLocation>
    <subcellularLocation>
        <location evidence="1">Chromosome</location>
    </subcellularLocation>
</comment>
<comment type="similarity">
    <text evidence="4">Belongs to the class V-like SAM-binding methyltransferase superfamily. Histone-lysine methyltransferase family. Suvar4-20 subfamily.</text>
</comment>
<comment type="sequence caution" evidence="6">
    <conflict type="erroneous gene model prediction">
        <sequence resource="EMBL-CDS" id="EAT78784"/>
    </conflict>
</comment>
<accession>Q0U3A4</accession>
<sequence length="662" mass="75177">MPPSKAEKRGLTLEKLASYDDVITDALVDKIYYWATIRKNRGTRFTASRGLQEEDIAGVIREQVIWDKDPVEAVQQLLDLPGLRKYMKGLRDEKDQDQFKRHLRRYVNIYMPDCPFEVTTTNRYTITDHEASITARRDINPREEIKYLTGVQVAMTEEQEKTLELARKDFSLVISSRKKTRSLFLGPARFANHDCDANARLSTKGYDGMQIVAVKPINEGDEITVSYGDDYFGDNNEECLCHTCEDRQQNGWAPMKRVEDSDDEDMEEAESPVENPSEATSSGTATSGGKRARDITEEDAGADLPPTSKRARIEKKPSPTKARASDHLREATLKKVHSTSSLRREMPVSSIEDPSANINVTSPQMTQDIRNQQRDGLLTVSLDETSSSRESTPQSPLMAASPKSSHSTDATSVDDEHHVDSLPKIKVEPEVVHENPALGVATVKEEVITTTVNAPWPSPPAEDDEMSDLSELSDSMEFDSVKQQIVKRKFRPTLRTTRSKSRYEVHNRVGTPVSSAVGQDGEWVENPRKPGDYMTSSSLLSAKFSKWVECQTCDVQFVQQDGYNTRKECPRCERHSKLYGYAWPKTEREGKHDKEERITDHRIVHRFVDPDEERELKRGKTKKILKESIRERFSTPRSGRESMSASVEVDSGRKRRRVRKTM</sequence>
<evidence type="ECO:0000250" key="1"/>
<evidence type="ECO:0000250" key="2">
    <source>
        <dbReference type="UniProtKB" id="Q9USK2"/>
    </source>
</evidence>
<evidence type="ECO:0000255" key="3">
    <source>
        <dbReference type="PROSITE-ProRule" id="PRU00190"/>
    </source>
</evidence>
<evidence type="ECO:0000255" key="4">
    <source>
        <dbReference type="PROSITE-ProRule" id="PRU00900"/>
    </source>
</evidence>
<evidence type="ECO:0000256" key="5">
    <source>
        <dbReference type="SAM" id="MobiDB-lite"/>
    </source>
</evidence>
<evidence type="ECO:0000305" key="6"/>
<dbReference type="EC" id="2.1.1.372" evidence="2"/>
<dbReference type="EMBL" id="CH445352">
    <property type="protein sequence ID" value="EAT78784.2"/>
    <property type="status" value="ALT_SEQ"/>
    <property type="molecule type" value="Genomic_DNA"/>
</dbReference>
<dbReference type="RefSeq" id="XP_001803966.1">
    <property type="nucleotide sequence ID" value="XM_001803914.1"/>
</dbReference>
<dbReference type="SMR" id="Q0U3A4"/>
<dbReference type="STRING" id="321614.Q0U3A4"/>
<dbReference type="GeneID" id="5980888"/>
<dbReference type="KEGG" id="pno:SNOG_13760"/>
<dbReference type="VEuPathDB" id="FungiDB:JI435_137600"/>
<dbReference type="eggNOG" id="KOG2589">
    <property type="taxonomic scope" value="Eukaryota"/>
</dbReference>
<dbReference type="InParanoid" id="Q0U3A4"/>
<dbReference type="OMA" id="FANHDCG"/>
<dbReference type="OrthoDB" id="6627536at2759"/>
<dbReference type="Proteomes" id="UP000001055">
    <property type="component" value="Unassembled WGS sequence"/>
</dbReference>
<dbReference type="GO" id="GO:0005694">
    <property type="term" value="C:chromosome"/>
    <property type="evidence" value="ECO:0007669"/>
    <property type="project" value="UniProtKB-SubCell"/>
</dbReference>
<dbReference type="GO" id="GO:0005634">
    <property type="term" value="C:nucleus"/>
    <property type="evidence" value="ECO:0000318"/>
    <property type="project" value="GO_Central"/>
</dbReference>
<dbReference type="GO" id="GO:0042799">
    <property type="term" value="F:histone H4K20 methyltransferase activity"/>
    <property type="evidence" value="ECO:0000318"/>
    <property type="project" value="GO_Central"/>
</dbReference>
<dbReference type="GO" id="GO:0140943">
    <property type="term" value="F:histone H4K20 trimethyltransferase activity"/>
    <property type="evidence" value="ECO:0007669"/>
    <property type="project" value="UniProtKB-EC"/>
</dbReference>
<dbReference type="GO" id="GO:0032259">
    <property type="term" value="P:methylation"/>
    <property type="evidence" value="ECO:0007669"/>
    <property type="project" value="UniProtKB-KW"/>
</dbReference>
<dbReference type="CDD" id="cd10524">
    <property type="entry name" value="SET_Suv4-20-like"/>
    <property type="match status" value="1"/>
</dbReference>
<dbReference type="Gene3D" id="1.10.10.1700">
    <property type="entry name" value="Histone-lysine N-methyltransferase"/>
    <property type="match status" value="1"/>
</dbReference>
<dbReference type="Gene3D" id="2.170.270.10">
    <property type="entry name" value="SET domain"/>
    <property type="match status" value="1"/>
</dbReference>
<dbReference type="InterPro" id="IPR041938">
    <property type="entry name" value="Hist-Lys_N-MTase_N"/>
</dbReference>
<dbReference type="InterPro" id="IPR025783">
    <property type="entry name" value="Set9_fungi"/>
</dbReference>
<dbReference type="InterPro" id="IPR001214">
    <property type="entry name" value="SET_dom"/>
</dbReference>
<dbReference type="InterPro" id="IPR046341">
    <property type="entry name" value="SET_dom_sf"/>
</dbReference>
<dbReference type="InterPro" id="IPR039977">
    <property type="entry name" value="Suv4-20/Set9"/>
</dbReference>
<dbReference type="PANTHER" id="PTHR12977:SF4">
    <property type="entry name" value="HISTONE-LYSINE N-METHYLTRANSFERASE KMT5B"/>
    <property type="match status" value="1"/>
</dbReference>
<dbReference type="PANTHER" id="PTHR12977">
    <property type="entry name" value="SUPPRESSOR OF VARIEGATION 4-20-RELATED"/>
    <property type="match status" value="1"/>
</dbReference>
<dbReference type="Pfam" id="PF00856">
    <property type="entry name" value="SET"/>
    <property type="match status" value="1"/>
</dbReference>
<dbReference type="SMART" id="SM00317">
    <property type="entry name" value="SET"/>
    <property type="match status" value="1"/>
</dbReference>
<dbReference type="SUPFAM" id="SSF82199">
    <property type="entry name" value="SET domain"/>
    <property type="match status" value="1"/>
</dbReference>
<dbReference type="PROSITE" id="PS51567">
    <property type="entry name" value="SAM_MT43_SUVAR420_1"/>
    <property type="match status" value="1"/>
</dbReference>
<dbReference type="PROSITE" id="PS50280">
    <property type="entry name" value="SET"/>
    <property type="match status" value="1"/>
</dbReference>
<protein>
    <recommendedName>
        <fullName>Histone-lysine N-methyltransferase SET9</fullName>
        <ecNumber evidence="2">2.1.1.372</ecNumber>
    </recommendedName>
    <alternativeName>
        <fullName>SET domain protein 9</fullName>
    </alternativeName>
</protein>
<proteinExistence type="inferred from homology"/>
<feature type="chain" id="PRO_0000281806" description="Histone-lysine N-methyltransferase SET9">
    <location>
        <begin position="1"/>
        <end position="662"/>
    </location>
</feature>
<feature type="domain" description="SET" evidence="3">
    <location>
        <begin position="114"/>
        <end position="228"/>
    </location>
</feature>
<feature type="region of interest" description="Disordered" evidence="5">
    <location>
        <begin position="252"/>
        <end position="418"/>
    </location>
</feature>
<feature type="region of interest" description="Disordered" evidence="5">
    <location>
        <begin position="627"/>
        <end position="662"/>
    </location>
</feature>
<feature type="compositionally biased region" description="Acidic residues" evidence="5">
    <location>
        <begin position="260"/>
        <end position="271"/>
    </location>
</feature>
<feature type="compositionally biased region" description="Low complexity" evidence="5">
    <location>
        <begin position="279"/>
        <end position="289"/>
    </location>
</feature>
<feature type="compositionally biased region" description="Basic and acidic residues" evidence="5">
    <location>
        <begin position="323"/>
        <end position="333"/>
    </location>
</feature>
<feature type="compositionally biased region" description="Polar residues" evidence="5">
    <location>
        <begin position="356"/>
        <end position="370"/>
    </location>
</feature>
<feature type="compositionally biased region" description="Polar residues" evidence="5">
    <location>
        <begin position="382"/>
        <end position="395"/>
    </location>
</feature>
<feature type="compositionally biased region" description="Polar residues" evidence="5">
    <location>
        <begin position="402"/>
        <end position="411"/>
    </location>
</feature>
<feature type="compositionally biased region" description="Basic and acidic residues" evidence="5">
    <location>
        <begin position="627"/>
        <end position="640"/>
    </location>
</feature>
<feature type="compositionally biased region" description="Basic residues" evidence="5">
    <location>
        <begin position="653"/>
        <end position="662"/>
    </location>
</feature>
<name>SET9_PHANO</name>